<dbReference type="EMBL" id="AM260480">
    <property type="protein sequence ID" value="CAJ97353.1"/>
    <property type="molecule type" value="Genomic_DNA"/>
</dbReference>
<dbReference type="RefSeq" id="WP_010811156.1">
    <property type="nucleotide sequence ID" value="NZ_CP039288.1"/>
</dbReference>
<dbReference type="SMR" id="Q0JY21"/>
<dbReference type="STRING" id="381666.H16_B2571"/>
<dbReference type="KEGG" id="reh:H16_B2571"/>
<dbReference type="eggNOG" id="COG4108">
    <property type="taxonomic scope" value="Bacteria"/>
</dbReference>
<dbReference type="HOGENOM" id="CLU_002794_2_1_4"/>
<dbReference type="OrthoDB" id="9804431at2"/>
<dbReference type="Proteomes" id="UP000008210">
    <property type="component" value="Chromosome 2"/>
</dbReference>
<dbReference type="GO" id="GO:0005829">
    <property type="term" value="C:cytosol"/>
    <property type="evidence" value="ECO:0007669"/>
    <property type="project" value="TreeGrafter"/>
</dbReference>
<dbReference type="GO" id="GO:0005525">
    <property type="term" value="F:GTP binding"/>
    <property type="evidence" value="ECO:0007669"/>
    <property type="project" value="UniProtKB-UniRule"/>
</dbReference>
<dbReference type="GO" id="GO:0003924">
    <property type="term" value="F:GTPase activity"/>
    <property type="evidence" value="ECO:0007669"/>
    <property type="project" value="InterPro"/>
</dbReference>
<dbReference type="GO" id="GO:0016150">
    <property type="term" value="F:translation release factor activity, codon nonspecific"/>
    <property type="evidence" value="ECO:0007669"/>
    <property type="project" value="TreeGrafter"/>
</dbReference>
<dbReference type="GO" id="GO:0016149">
    <property type="term" value="F:translation release factor activity, codon specific"/>
    <property type="evidence" value="ECO:0007669"/>
    <property type="project" value="UniProtKB-UniRule"/>
</dbReference>
<dbReference type="GO" id="GO:0006449">
    <property type="term" value="P:regulation of translational termination"/>
    <property type="evidence" value="ECO:0007669"/>
    <property type="project" value="UniProtKB-UniRule"/>
</dbReference>
<dbReference type="CDD" id="cd04169">
    <property type="entry name" value="RF3"/>
    <property type="match status" value="1"/>
</dbReference>
<dbReference type="CDD" id="cd03689">
    <property type="entry name" value="RF3_II"/>
    <property type="match status" value="1"/>
</dbReference>
<dbReference type="CDD" id="cd16259">
    <property type="entry name" value="RF3_III"/>
    <property type="match status" value="1"/>
</dbReference>
<dbReference type="FunFam" id="2.40.30.10:FF:000040">
    <property type="entry name" value="Peptide chain release factor 3"/>
    <property type="match status" value="1"/>
</dbReference>
<dbReference type="FunFam" id="3.30.70.3280:FF:000001">
    <property type="entry name" value="Peptide chain release factor 3"/>
    <property type="match status" value="1"/>
</dbReference>
<dbReference type="FunFam" id="3.40.50.300:FF:000542">
    <property type="entry name" value="Peptide chain release factor 3"/>
    <property type="match status" value="1"/>
</dbReference>
<dbReference type="Gene3D" id="3.40.50.300">
    <property type="entry name" value="P-loop containing nucleotide triphosphate hydrolases"/>
    <property type="match status" value="2"/>
</dbReference>
<dbReference type="Gene3D" id="3.30.70.3280">
    <property type="entry name" value="Peptide chain release factor 3, domain III"/>
    <property type="match status" value="1"/>
</dbReference>
<dbReference type="HAMAP" id="MF_00072">
    <property type="entry name" value="Rel_fac_3"/>
    <property type="match status" value="1"/>
</dbReference>
<dbReference type="InterPro" id="IPR053905">
    <property type="entry name" value="EF-G-like_DII"/>
</dbReference>
<dbReference type="InterPro" id="IPR035647">
    <property type="entry name" value="EFG_III/V"/>
</dbReference>
<dbReference type="InterPro" id="IPR031157">
    <property type="entry name" value="G_TR_CS"/>
</dbReference>
<dbReference type="InterPro" id="IPR027417">
    <property type="entry name" value="P-loop_NTPase"/>
</dbReference>
<dbReference type="InterPro" id="IPR004548">
    <property type="entry name" value="PrfC"/>
</dbReference>
<dbReference type="InterPro" id="IPR032090">
    <property type="entry name" value="RF3_C"/>
</dbReference>
<dbReference type="InterPro" id="IPR038467">
    <property type="entry name" value="RF3_dom_3_sf"/>
</dbReference>
<dbReference type="InterPro" id="IPR041732">
    <property type="entry name" value="RF3_GTP-bd"/>
</dbReference>
<dbReference type="InterPro" id="IPR005225">
    <property type="entry name" value="Small_GTP-bd"/>
</dbReference>
<dbReference type="InterPro" id="IPR000795">
    <property type="entry name" value="T_Tr_GTP-bd_dom"/>
</dbReference>
<dbReference type="InterPro" id="IPR009000">
    <property type="entry name" value="Transl_B-barrel_sf"/>
</dbReference>
<dbReference type="NCBIfam" id="TIGR00503">
    <property type="entry name" value="prfC"/>
    <property type="match status" value="1"/>
</dbReference>
<dbReference type="NCBIfam" id="NF001964">
    <property type="entry name" value="PRK00741.1"/>
    <property type="match status" value="1"/>
</dbReference>
<dbReference type="NCBIfam" id="TIGR00231">
    <property type="entry name" value="small_GTP"/>
    <property type="match status" value="1"/>
</dbReference>
<dbReference type="PANTHER" id="PTHR43556">
    <property type="entry name" value="PEPTIDE CHAIN RELEASE FACTOR RF3"/>
    <property type="match status" value="1"/>
</dbReference>
<dbReference type="PANTHER" id="PTHR43556:SF2">
    <property type="entry name" value="PEPTIDE CHAIN RELEASE FACTOR RF3"/>
    <property type="match status" value="1"/>
</dbReference>
<dbReference type="Pfam" id="PF22042">
    <property type="entry name" value="EF-G_D2"/>
    <property type="match status" value="1"/>
</dbReference>
<dbReference type="Pfam" id="PF00009">
    <property type="entry name" value="GTP_EFTU"/>
    <property type="match status" value="1"/>
</dbReference>
<dbReference type="Pfam" id="PF16658">
    <property type="entry name" value="RF3_C"/>
    <property type="match status" value="1"/>
</dbReference>
<dbReference type="PRINTS" id="PR00315">
    <property type="entry name" value="ELONGATNFCT"/>
</dbReference>
<dbReference type="SUPFAM" id="SSF54980">
    <property type="entry name" value="EF-G C-terminal domain-like"/>
    <property type="match status" value="1"/>
</dbReference>
<dbReference type="SUPFAM" id="SSF52540">
    <property type="entry name" value="P-loop containing nucleoside triphosphate hydrolases"/>
    <property type="match status" value="1"/>
</dbReference>
<dbReference type="SUPFAM" id="SSF50447">
    <property type="entry name" value="Translation proteins"/>
    <property type="match status" value="1"/>
</dbReference>
<dbReference type="PROSITE" id="PS00301">
    <property type="entry name" value="G_TR_1"/>
    <property type="match status" value="1"/>
</dbReference>
<dbReference type="PROSITE" id="PS51722">
    <property type="entry name" value="G_TR_2"/>
    <property type="match status" value="1"/>
</dbReference>
<organism>
    <name type="scientific">Cupriavidus necator (strain ATCC 17699 / DSM 428 / KCTC 22496 / NCIMB 10442 / H16 / Stanier 337)</name>
    <name type="common">Ralstonia eutropha</name>
    <dbReference type="NCBI Taxonomy" id="381666"/>
    <lineage>
        <taxon>Bacteria</taxon>
        <taxon>Pseudomonadati</taxon>
        <taxon>Pseudomonadota</taxon>
        <taxon>Betaproteobacteria</taxon>
        <taxon>Burkholderiales</taxon>
        <taxon>Burkholderiaceae</taxon>
        <taxon>Cupriavidus</taxon>
    </lineage>
</organism>
<gene>
    <name evidence="1" type="primary">prfC</name>
    <name type="ordered locus">H16_B2571</name>
</gene>
<accession>Q0JY21</accession>
<proteinExistence type="inferred from homology"/>
<evidence type="ECO:0000255" key="1">
    <source>
        <dbReference type="HAMAP-Rule" id="MF_00072"/>
    </source>
</evidence>
<comment type="function">
    <text evidence="1">Increases the formation of ribosomal termination complexes and stimulates activities of RF-1 and RF-2. It binds guanine nucleotides and has strong preference for UGA stop codons. It may interact directly with the ribosome. The stimulation of RF-1 and RF-2 is significantly reduced by GTP and GDP, but not by GMP.</text>
</comment>
<comment type="subcellular location">
    <subcellularLocation>
        <location evidence="1">Cytoplasm</location>
    </subcellularLocation>
</comment>
<comment type="similarity">
    <text evidence="1">Belongs to the TRAFAC class translation factor GTPase superfamily. Classic translation factor GTPase family. PrfC subfamily.</text>
</comment>
<keyword id="KW-0963">Cytoplasm</keyword>
<keyword id="KW-0342">GTP-binding</keyword>
<keyword id="KW-0547">Nucleotide-binding</keyword>
<keyword id="KW-0648">Protein biosynthesis</keyword>
<keyword id="KW-1185">Reference proteome</keyword>
<reference key="1">
    <citation type="journal article" date="2006" name="Nat. Biotechnol.">
        <title>Genome sequence of the bioplastic-producing 'Knallgas' bacterium Ralstonia eutropha H16.</title>
        <authorList>
            <person name="Pohlmann A."/>
            <person name="Fricke W.F."/>
            <person name="Reinecke F."/>
            <person name="Kusian B."/>
            <person name="Liesegang H."/>
            <person name="Cramm R."/>
            <person name="Eitinger T."/>
            <person name="Ewering C."/>
            <person name="Poetter M."/>
            <person name="Schwartz E."/>
            <person name="Strittmatter A."/>
            <person name="Voss I."/>
            <person name="Gottschalk G."/>
            <person name="Steinbuechel A."/>
            <person name="Friedrich B."/>
            <person name="Bowien B."/>
        </authorList>
    </citation>
    <scope>NUCLEOTIDE SEQUENCE [LARGE SCALE GENOMIC DNA]</scope>
    <source>
        <strain>ATCC 17699 / DSM 428 / KCTC 22496 / NCIMB 10442 / H16 / Stanier 337</strain>
    </source>
</reference>
<protein>
    <recommendedName>
        <fullName evidence="1">Peptide chain release factor 3</fullName>
        <shortName evidence="1">RF-3</shortName>
    </recommendedName>
</protein>
<sequence length="533" mass="59314">MSSLVSEIARRRTFAIISHPDAGKTTLTEKLLWFGGAIQVAGEVRARKADRHATSDWMELEKQRGISVTSSVMQFPYRRETADGKAQENIVNLLDTPGHEDFSEDTYRTLTAVDSAVMVIDSVNGVEAQTIKLLNVCRLRDTPILTFINKLDREGRSPIELLDEIEEVLQIQCAPMTWPIGMGKAFRGVYHLINDKVQLFDPHGEKGTAAILDGLDNPELDRILGSQAEELRIEIELVRGASHTFDKDAFLNGKQTPVYFGSAINNFGVQSLLDALCELSPPPLARNTDSRVVEPQEPKFTGFVFKIQANMDPRHRDRIAFVRVCSGRFERGMKLLHVSAGKTVAINNAITFMAQDRNTTEEAYAGDIIGVPNHGTIRLGDVFTEGEPLKFTGIPSFAPEFFRRARLNNPLKVKQLQKGLQQLAEEGATQMFRPLASNDLVLGAVGILQFDVVAHRLEHEYGVDAIFESHECATARWLKGTPAEIEKLIAKAGHNVALDGAGDHVYLAPSMVNLRLTQERFPELQFMETREIV</sequence>
<feature type="chain" id="PRO_1000023673" description="Peptide chain release factor 3">
    <location>
        <begin position="1"/>
        <end position="533"/>
    </location>
</feature>
<feature type="domain" description="tr-type G">
    <location>
        <begin position="9"/>
        <end position="284"/>
    </location>
</feature>
<feature type="binding site" evidence="1">
    <location>
        <begin position="18"/>
        <end position="25"/>
    </location>
    <ligand>
        <name>GTP</name>
        <dbReference type="ChEBI" id="CHEBI:37565"/>
    </ligand>
</feature>
<feature type="binding site" evidence="1">
    <location>
        <begin position="95"/>
        <end position="99"/>
    </location>
    <ligand>
        <name>GTP</name>
        <dbReference type="ChEBI" id="CHEBI:37565"/>
    </ligand>
</feature>
<feature type="binding site" evidence="1">
    <location>
        <begin position="149"/>
        <end position="152"/>
    </location>
    <ligand>
        <name>GTP</name>
        <dbReference type="ChEBI" id="CHEBI:37565"/>
    </ligand>
</feature>
<name>RF3_CUPNH</name>